<name>RSMG_CARHZ</name>
<organism>
    <name type="scientific">Carboxydothermus hydrogenoformans (strain ATCC BAA-161 / DSM 6008 / Z-2901)</name>
    <dbReference type="NCBI Taxonomy" id="246194"/>
    <lineage>
        <taxon>Bacteria</taxon>
        <taxon>Bacillati</taxon>
        <taxon>Bacillota</taxon>
        <taxon>Clostridia</taxon>
        <taxon>Thermoanaerobacterales</taxon>
        <taxon>Thermoanaerobacteraceae</taxon>
        <taxon>Carboxydothermus</taxon>
    </lineage>
</organism>
<accession>Q3AG54</accession>
<protein>
    <recommendedName>
        <fullName evidence="1">Ribosomal RNA small subunit methyltransferase G</fullName>
        <ecNumber evidence="1">2.1.1.-</ecNumber>
    </recommendedName>
    <alternativeName>
        <fullName evidence="1">16S rRNA 7-methylguanosine methyltransferase</fullName>
        <shortName evidence="1">16S rRNA m7G methyltransferase</shortName>
    </alternativeName>
</protein>
<gene>
    <name evidence="1" type="primary">rsmG</name>
    <name type="ordered locus">CHY_0008</name>
</gene>
<keyword id="KW-0963">Cytoplasm</keyword>
<keyword id="KW-0489">Methyltransferase</keyword>
<keyword id="KW-1185">Reference proteome</keyword>
<keyword id="KW-0698">rRNA processing</keyword>
<keyword id="KW-0949">S-adenosyl-L-methionine</keyword>
<keyword id="KW-0808">Transferase</keyword>
<proteinExistence type="inferred from homology"/>
<dbReference type="EC" id="2.1.1.-" evidence="1"/>
<dbReference type="EMBL" id="CP000141">
    <property type="protein sequence ID" value="ABB15853.1"/>
    <property type="molecule type" value="Genomic_DNA"/>
</dbReference>
<dbReference type="RefSeq" id="WP_011342956.1">
    <property type="nucleotide sequence ID" value="NC_007503.1"/>
</dbReference>
<dbReference type="SMR" id="Q3AG54"/>
<dbReference type="FunCoup" id="Q3AG54">
    <property type="interactions" value="380"/>
</dbReference>
<dbReference type="STRING" id="246194.CHY_0008"/>
<dbReference type="KEGG" id="chy:CHY_0008"/>
<dbReference type="eggNOG" id="COG0357">
    <property type="taxonomic scope" value="Bacteria"/>
</dbReference>
<dbReference type="HOGENOM" id="CLU_065341_0_0_9"/>
<dbReference type="InParanoid" id="Q3AG54"/>
<dbReference type="OrthoDB" id="9808773at2"/>
<dbReference type="Proteomes" id="UP000002706">
    <property type="component" value="Chromosome"/>
</dbReference>
<dbReference type="GO" id="GO:0005829">
    <property type="term" value="C:cytosol"/>
    <property type="evidence" value="ECO:0007669"/>
    <property type="project" value="TreeGrafter"/>
</dbReference>
<dbReference type="GO" id="GO:0070043">
    <property type="term" value="F:rRNA (guanine-N7-)-methyltransferase activity"/>
    <property type="evidence" value="ECO:0007669"/>
    <property type="project" value="UniProtKB-UniRule"/>
</dbReference>
<dbReference type="FunFam" id="3.40.50.150:FF:000041">
    <property type="entry name" value="Ribosomal RNA small subunit methyltransferase G"/>
    <property type="match status" value="1"/>
</dbReference>
<dbReference type="Gene3D" id="3.40.50.150">
    <property type="entry name" value="Vaccinia Virus protein VP39"/>
    <property type="match status" value="1"/>
</dbReference>
<dbReference type="HAMAP" id="MF_00074">
    <property type="entry name" value="16SrRNA_methyltr_G"/>
    <property type="match status" value="1"/>
</dbReference>
<dbReference type="InterPro" id="IPR003682">
    <property type="entry name" value="rRNA_ssu_MeTfrase_G"/>
</dbReference>
<dbReference type="InterPro" id="IPR029063">
    <property type="entry name" value="SAM-dependent_MTases_sf"/>
</dbReference>
<dbReference type="NCBIfam" id="TIGR00138">
    <property type="entry name" value="rsmG_gidB"/>
    <property type="match status" value="1"/>
</dbReference>
<dbReference type="PANTHER" id="PTHR31760">
    <property type="entry name" value="S-ADENOSYL-L-METHIONINE-DEPENDENT METHYLTRANSFERASES SUPERFAMILY PROTEIN"/>
    <property type="match status" value="1"/>
</dbReference>
<dbReference type="PANTHER" id="PTHR31760:SF0">
    <property type="entry name" value="S-ADENOSYL-L-METHIONINE-DEPENDENT METHYLTRANSFERASES SUPERFAMILY PROTEIN"/>
    <property type="match status" value="1"/>
</dbReference>
<dbReference type="Pfam" id="PF02527">
    <property type="entry name" value="GidB"/>
    <property type="match status" value="1"/>
</dbReference>
<dbReference type="PIRSF" id="PIRSF003078">
    <property type="entry name" value="GidB"/>
    <property type="match status" value="1"/>
</dbReference>
<dbReference type="SUPFAM" id="SSF53335">
    <property type="entry name" value="S-adenosyl-L-methionine-dependent methyltransferases"/>
    <property type="match status" value="1"/>
</dbReference>
<feature type="chain" id="PRO_1000010131" description="Ribosomal RNA small subunit methyltransferase G">
    <location>
        <begin position="1"/>
        <end position="235"/>
    </location>
</feature>
<feature type="binding site" evidence="1">
    <location>
        <position position="75"/>
    </location>
    <ligand>
        <name>S-adenosyl-L-methionine</name>
        <dbReference type="ChEBI" id="CHEBI:59789"/>
    </ligand>
</feature>
<feature type="binding site" evidence="1">
    <location>
        <position position="80"/>
    </location>
    <ligand>
        <name>S-adenosyl-L-methionine</name>
        <dbReference type="ChEBI" id="CHEBI:59789"/>
    </ligand>
</feature>
<feature type="binding site" evidence="1">
    <location>
        <begin position="126"/>
        <end position="127"/>
    </location>
    <ligand>
        <name>S-adenosyl-L-methionine</name>
        <dbReference type="ChEBI" id="CHEBI:59789"/>
    </ligand>
</feature>
<feature type="binding site" evidence="1">
    <location>
        <position position="145"/>
    </location>
    <ligand>
        <name>S-adenosyl-L-methionine</name>
        <dbReference type="ChEBI" id="CHEBI:59789"/>
    </ligand>
</feature>
<sequence length="235" mass="26917">MEAKLKTFFAEFGLSIEKEKIQLFERYYRLLISENEKYNLTAVTGEDEVIVKHFLDSTAVLIYRDLTDLNAVDIGTGAGFPGIPLKIMVPGLKLLLLDSLKKRCLFLERVVRELNLTNVTVINERAENLGRQKPFRELFDVTFSRAVAEVRVLLEFHAPLLRLGGETILFKGPGVDEELKKAEKAAKQLGMELKDVYYYRLPGNFGERSLVVYKKLQNTPENYPRRPGIPEKRPL</sequence>
<reference key="1">
    <citation type="journal article" date="2005" name="PLoS Genet.">
        <title>Life in hot carbon monoxide: the complete genome sequence of Carboxydothermus hydrogenoformans Z-2901.</title>
        <authorList>
            <person name="Wu M."/>
            <person name="Ren Q."/>
            <person name="Durkin A.S."/>
            <person name="Daugherty S.C."/>
            <person name="Brinkac L.M."/>
            <person name="Dodson R.J."/>
            <person name="Madupu R."/>
            <person name="Sullivan S.A."/>
            <person name="Kolonay J.F."/>
            <person name="Nelson W.C."/>
            <person name="Tallon L.J."/>
            <person name="Jones K.M."/>
            <person name="Ulrich L.E."/>
            <person name="Gonzalez J.M."/>
            <person name="Zhulin I.B."/>
            <person name="Robb F.T."/>
            <person name="Eisen J.A."/>
        </authorList>
    </citation>
    <scope>NUCLEOTIDE SEQUENCE [LARGE SCALE GENOMIC DNA]</scope>
    <source>
        <strain>ATCC BAA-161 / DSM 6008 / Z-2901</strain>
    </source>
</reference>
<comment type="function">
    <text evidence="1">Specifically methylates the N7 position of a guanine in 16S rRNA.</text>
</comment>
<comment type="subcellular location">
    <subcellularLocation>
        <location evidence="1">Cytoplasm</location>
    </subcellularLocation>
</comment>
<comment type="similarity">
    <text evidence="1">Belongs to the methyltransferase superfamily. RNA methyltransferase RsmG family.</text>
</comment>
<evidence type="ECO:0000255" key="1">
    <source>
        <dbReference type="HAMAP-Rule" id="MF_00074"/>
    </source>
</evidence>